<keyword id="KW-1185">Reference proteome</keyword>
<keyword id="KW-0687">Ribonucleoprotein</keyword>
<keyword id="KW-0689">Ribosomal protein</keyword>
<keyword id="KW-0694">RNA-binding</keyword>
<keyword id="KW-0699">rRNA-binding</keyword>
<organism>
    <name type="scientific">Chlamydia trachomatis serovar D (strain ATCC VR-885 / DSM 19411 / UW-3/Cx)</name>
    <dbReference type="NCBI Taxonomy" id="272561"/>
    <lineage>
        <taxon>Bacteria</taxon>
        <taxon>Pseudomonadati</taxon>
        <taxon>Chlamydiota</taxon>
        <taxon>Chlamydiia</taxon>
        <taxon>Chlamydiales</taxon>
        <taxon>Chlamydiaceae</taxon>
        <taxon>Chlamydia/Chlamydophila group</taxon>
        <taxon>Chlamydia</taxon>
    </lineage>
</organism>
<dbReference type="EMBL" id="AE001273">
    <property type="protein sequence ID" value="AAC68230.1"/>
    <property type="molecule type" value="Genomic_DNA"/>
</dbReference>
<dbReference type="PIR" id="C71491">
    <property type="entry name" value="C71491"/>
</dbReference>
<dbReference type="RefSeq" id="NP_220143.1">
    <property type="nucleotide sequence ID" value="NC_000117.1"/>
</dbReference>
<dbReference type="RefSeq" id="WP_010725281.1">
    <property type="nucleotide sequence ID" value="NC_000117.1"/>
</dbReference>
<dbReference type="SMR" id="O84631"/>
<dbReference type="FunCoup" id="O84631">
    <property type="interactions" value="279"/>
</dbReference>
<dbReference type="STRING" id="272561.CT_626"/>
<dbReference type="EnsemblBacteria" id="AAC68230">
    <property type="protein sequence ID" value="AAC68230"/>
    <property type="gene ID" value="CT_626"/>
</dbReference>
<dbReference type="GeneID" id="884406"/>
<dbReference type="KEGG" id="ctr:CT_626"/>
<dbReference type="PATRIC" id="fig|272561.5.peg.684"/>
<dbReference type="HOGENOM" id="CLU_092403_0_1_0"/>
<dbReference type="InParanoid" id="O84631"/>
<dbReference type="OrthoDB" id="9803672at2"/>
<dbReference type="Proteomes" id="UP000000431">
    <property type="component" value="Chromosome"/>
</dbReference>
<dbReference type="GO" id="GO:0015935">
    <property type="term" value="C:small ribosomal subunit"/>
    <property type="evidence" value="ECO:0000318"/>
    <property type="project" value="GO_Central"/>
</dbReference>
<dbReference type="GO" id="GO:0019843">
    <property type="term" value="F:rRNA binding"/>
    <property type="evidence" value="ECO:0000318"/>
    <property type="project" value="GO_Central"/>
</dbReference>
<dbReference type="GO" id="GO:0003735">
    <property type="term" value="F:structural constituent of ribosome"/>
    <property type="evidence" value="ECO:0000318"/>
    <property type="project" value="GO_Central"/>
</dbReference>
<dbReference type="GO" id="GO:0042274">
    <property type="term" value="P:ribosomal small subunit biogenesis"/>
    <property type="evidence" value="ECO:0000318"/>
    <property type="project" value="GO_Central"/>
</dbReference>
<dbReference type="GO" id="GO:0006412">
    <property type="term" value="P:translation"/>
    <property type="evidence" value="ECO:0007669"/>
    <property type="project" value="UniProtKB-UniRule"/>
</dbReference>
<dbReference type="CDD" id="cd00165">
    <property type="entry name" value="S4"/>
    <property type="match status" value="1"/>
</dbReference>
<dbReference type="FunFam" id="3.10.290.10:FF:000001">
    <property type="entry name" value="30S ribosomal protein S4"/>
    <property type="match status" value="1"/>
</dbReference>
<dbReference type="Gene3D" id="1.10.1050.10">
    <property type="entry name" value="Ribosomal Protein S4 Delta 41, Chain A, domain 1"/>
    <property type="match status" value="1"/>
</dbReference>
<dbReference type="Gene3D" id="3.10.290.10">
    <property type="entry name" value="RNA-binding S4 domain"/>
    <property type="match status" value="1"/>
</dbReference>
<dbReference type="HAMAP" id="MF_01306_B">
    <property type="entry name" value="Ribosomal_uS4_B"/>
    <property type="match status" value="1"/>
</dbReference>
<dbReference type="InterPro" id="IPR022801">
    <property type="entry name" value="Ribosomal_uS4"/>
</dbReference>
<dbReference type="InterPro" id="IPR005709">
    <property type="entry name" value="Ribosomal_uS4_bac-type"/>
</dbReference>
<dbReference type="InterPro" id="IPR001912">
    <property type="entry name" value="Ribosomal_uS4_N"/>
</dbReference>
<dbReference type="InterPro" id="IPR002942">
    <property type="entry name" value="S4_RNA-bd"/>
</dbReference>
<dbReference type="InterPro" id="IPR036986">
    <property type="entry name" value="S4_RNA-bd_sf"/>
</dbReference>
<dbReference type="NCBIfam" id="NF003717">
    <property type="entry name" value="PRK05327.1"/>
    <property type="match status" value="1"/>
</dbReference>
<dbReference type="NCBIfam" id="TIGR01017">
    <property type="entry name" value="rpsD_bact"/>
    <property type="match status" value="1"/>
</dbReference>
<dbReference type="PANTHER" id="PTHR11831">
    <property type="entry name" value="30S 40S RIBOSOMAL PROTEIN"/>
    <property type="match status" value="1"/>
</dbReference>
<dbReference type="PANTHER" id="PTHR11831:SF4">
    <property type="entry name" value="SMALL RIBOSOMAL SUBUNIT PROTEIN US4M"/>
    <property type="match status" value="1"/>
</dbReference>
<dbReference type="Pfam" id="PF00163">
    <property type="entry name" value="Ribosomal_S4"/>
    <property type="match status" value="1"/>
</dbReference>
<dbReference type="Pfam" id="PF01479">
    <property type="entry name" value="S4"/>
    <property type="match status" value="1"/>
</dbReference>
<dbReference type="SMART" id="SM01390">
    <property type="entry name" value="Ribosomal_S4"/>
    <property type="match status" value="1"/>
</dbReference>
<dbReference type="SMART" id="SM00363">
    <property type="entry name" value="S4"/>
    <property type="match status" value="1"/>
</dbReference>
<dbReference type="SUPFAM" id="SSF55174">
    <property type="entry name" value="Alpha-L RNA-binding motif"/>
    <property type="match status" value="1"/>
</dbReference>
<dbReference type="PROSITE" id="PS50889">
    <property type="entry name" value="S4"/>
    <property type="match status" value="1"/>
</dbReference>
<sequence length="209" mass="23687">MARYCGPKNRIARRFGANIFGRGRNPLLRKPNPPGQHGMQRKKKSDYGLQLEEKQKLKACYGMILEKQLVKAYKEVVNKQGNVAQMFLEKFECRLDNIVYRLGFAKTIFAAQQLVSHGHVLVNGKKVDRRSFFVRPGMQISLKEKSKRLAIVTESLENKDQSSLPAYLSLDKAAFKGELVVAPELDQIASQLPLPVNVSVICEFLSHRT</sequence>
<proteinExistence type="inferred from homology"/>
<feature type="chain" id="PRO_0000132365" description="Small ribosomal subunit protein uS4">
    <location>
        <begin position="1"/>
        <end position="209"/>
    </location>
</feature>
<feature type="domain" description="S4 RNA-binding" evidence="1">
    <location>
        <begin position="93"/>
        <end position="154"/>
    </location>
</feature>
<feature type="region of interest" description="Disordered" evidence="2">
    <location>
        <begin position="22"/>
        <end position="45"/>
    </location>
</feature>
<accession>O84631</accession>
<comment type="function">
    <text evidence="1">One of the primary rRNA binding proteins, it binds directly to 16S rRNA where it nucleates assembly of the body of the 30S subunit.</text>
</comment>
<comment type="function">
    <text evidence="1">With S5 and S12 plays an important role in translational accuracy.</text>
</comment>
<comment type="subunit">
    <text evidence="1">Part of the 30S ribosomal subunit. Contacts protein S5. The interaction surface between S4 and S5 is involved in control of translational fidelity.</text>
</comment>
<comment type="similarity">
    <text evidence="1">Belongs to the universal ribosomal protein uS4 family.</text>
</comment>
<evidence type="ECO:0000255" key="1">
    <source>
        <dbReference type="HAMAP-Rule" id="MF_01306"/>
    </source>
</evidence>
<evidence type="ECO:0000256" key="2">
    <source>
        <dbReference type="SAM" id="MobiDB-lite"/>
    </source>
</evidence>
<evidence type="ECO:0000305" key="3"/>
<gene>
    <name evidence="1" type="primary">rpsD</name>
    <name type="synonym">rs4</name>
    <name type="ordered locus">CT_626</name>
</gene>
<protein>
    <recommendedName>
        <fullName evidence="1">Small ribosomal subunit protein uS4</fullName>
    </recommendedName>
    <alternativeName>
        <fullName evidence="3">30S ribosomal protein S4</fullName>
    </alternativeName>
</protein>
<name>RS4_CHLTR</name>
<reference key="1">
    <citation type="journal article" date="1998" name="Science">
        <title>Genome sequence of an obligate intracellular pathogen of humans: Chlamydia trachomatis.</title>
        <authorList>
            <person name="Stephens R.S."/>
            <person name="Kalman S."/>
            <person name="Lammel C.J."/>
            <person name="Fan J."/>
            <person name="Marathe R."/>
            <person name="Aravind L."/>
            <person name="Mitchell W.P."/>
            <person name="Olinger L."/>
            <person name="Tatusov R.L."/>
            <person name="Zhao Q."/>
            <person name="Koonin E.V."/>
            <person name="Davis R.W."/>
        </authorList>
    </citation>
    <scope>NUCLEOTIDE SEQUENCE [LARGE SCALE GENOMIC DNA]</scope>
    <source>
        <strain>ATCC VR-885 / DSM 19411 / UW-3/Cx</strain>
    </source>
</reference>